<sequence length="910" mass="101322">MFSSIARAIIGTSNDRALKAYRRRIAEINGHEAALATLDDAALQGKTSEFRDRLAAGESLDRLLPEAFAVCREAAKRVLGMRHFDVQLIGGMVLHDGKIAEMKTGEGKTLVATLPVYLNALSGKGVHVVTVNDYLAKRDAGWMGQLYNFLGLSVGVIVPGLEDDARRDAYAADITYGTNNEFGFDYLRDNMKYALADMVQRDFNYAIVDEVDSILIDEARTPLIISGPSDEPTELYNQVDGIVKQLVEDPDTYDKDEKFKTVNLTELGSERVEQMLSEAGLLTEGNLYDVFNVSLVHHTNQSLRAHTLFTRDVDYIVKDGQVIIIDEFTGRMMEGRRYSDGLHQALEAKEHVTVERENQTLASITFQNYFRLYPKLSGMTGTAMTEADEFDEIYKLAVVEIPTNVPVARKDGDDEVYRSADEKYEAVAALIEECRQRQQPVLVGTTSIEKSEIISNLLNSRKIPHAVLNARFHEQEAAIVAEAGAPGAVTIATNMAGRGTDIKLGGNLEMRLKTELERLPESARPAREAEIRAEIEAAHDIVHAAGGLFVIGTERHESRRVDNQLRGRSGRQGDPGASRFFLSLEDDLMRIFGSDRMGPMLEKLGLKDGEAIIHPWINKALEKAQKKVEARNFDTRKNLLKYDDVMNNQRKEVYAQRREFMRAESVADVIGEMRADTIAQMVERRIPEKAYAEQWESAELAEDVKRVFGLELPVVDWAAEEGIDESHLRERISEAVEAHMAAKAANFGPDFMRFLEKSILLQTLDHLWKEHLLALDHLRQGIGLRAYGQRDPLNEYKAEAFALFTAMLEDLKEQVSSVLAHVELGSDPATAPAPAFDPASMFTSHPASGPYDGVALAEPQPTLAPEMAVSTYRAESVDPNRPETWASTPRNAACPCGSGKKYKYCHGRVT</sequence>
<keyword id="KW-0067">ATP-binding</keyword>
<keyword id="KW-0997">Cell inner membrane</keyword>
<keyword id="KW-1003">Cell membrane</keyword>
<keyword id="KW-0963">Cytoplasm</keyword>
<keyword id="KW-0472">Membrane</keyword>
<keyword id="KW-0479">Metal-binding</keyword>
<keyword id="KW-0547">Nucleotide-binding</keyword>
<keyword id="KW-0653">Protein transport</keyword>
<keyword id="KW-1185">Reference proteome</keyword>
<keyword id="KW-1278">Translocase</keyword>
<keyword id="KW-0811">Translocation</keyword>
<keyword id="KW-0813">Transport</keyword>
<keyword id="KW-0862">Zinc</keyword>
<organism>
    <name type="scientific">Acidiphilium cryptum (strain JF-5)</name>
    <dbReference type="NCBI Taxonomy" id="349163"/>
    <lineage>
        <taxon>Bacteria</taxon>
        <taxon>Pseudomonadati</taxon>
        <taxon>Pseudomonadota</taxon>
        <taxon>Alphaproteobacteria</taxon>
        <taxon>Acetobacterales</taxon>
        <taxon>Acidocellaceae</taxon>
        <taxon>Acidiphilium</taxon>
    </lineage>
</organism>
<protein>
    <recommendedName>
        <fullName evidence="1">Protein translocase subunit SecA</fullName>
        <ecNumber evidence="1">7.4.2.8</ecNumber>
    </recommendedName>
</protein>
<dbReference type="EC" id="7.4.2.8" evidence="1"/>
<dbReference type="EMBL" id="CP000697">
    <property type="protein sequence ID" value="ABQ31441.1"/>
    <property type="status" value="ALT_INIT"/>
    <property type="molecule type" value="Genomic_DNA"/>
</dbReference>
<dbReference type="RefSeq" id="WP_043509192.1">
    <property type="nucleotide sequence ID" value="NC_009484.1"/>
</dbReference>
<dbReference type="SMR" id="A5G0Q9"/>
<dbReference type="STRING" id="349163.Acry_2246"/>
<dbReference type="KEGG" id="acr:Acry_2246"/>
<dbReference type="eggNOG" id="COG0653">
    <property type="taxonomic scope" value="Bacteria"/>
</dbReference>
<dbReference type="HOGENOM" id="CLU_005314_3_0_5"/>
<dbReference type="Proteomes" id="UP000000245">
    <property type="component" value="Chromosome"/>
</dbReference>
<dbReference type="GO" id="GO:0031522">
    <property type="term" value="C:cell envelope Sec protein transport complex"/>
    <property type="evidence" value="ECO:0007669"/>
    <property type="project" value="TreeGrafter"/>
</dbReference>
<dbReference type="GO" id="GO:0005829">
    <property type="term" value="C:cytosol"/>
    <property type="evidence" value="ECO:0007669"/>
    <property type="project" value="TreeGrafter"/>
</dbReference>
<dbReference type="GO" id="GO:0005886">
    <property type="term" value="C:plasma membrane"/>
    <property type="evidence" value="ECO:0007669"/>
    <property type="project" value="UniProtKB-SubCell"/>
</dbReference>
<dbReference type="GO" id="GO:0005524">
    <property type="term" value="F:ATP binding"/>
    <property type="evidence" value="ECO:0007669"/>
    <property type="project" value="UniProtKB-UniRule"/>
</dbReference>
<dbReference type="GO" id="GO:0046872">
    <property type="term" value="F:metal ion binding"/>
    <property type="evidence" value="ECO:0007669"/>
    <property type="project" value="UniProtKB-KW"/>
</dbReference>
<dbReference type="GO" id="GO:0008564">
    <property type="term" value="F:protein-exporting ATPase activity"/>
    <property type="evidence" value="ECO:0007669"/>
    <property type="project" value="UniProtKB-EC"/>
</dbReference>
<dbReference type="GO" id="GO:0065002">
    <property type="term" value="P:intracellular protein transmembrane transport"/>
    <property type="evidence" value="ECO:0007669"/>
    <property type="project" value="UniProtKB-UniRule"/>
</dbReference>
<dbReference type="GO" id="GO:0017038">
    <property type="term" value="P:protein import"/>
    <property type="evidence" value="ECO:0007669"/>
    <property type="project" value="InterPro"/>
</dbReference>
<dbReference type="GO" id="GO:0006605">
    <property type="term" value="P:protein targeting"/>
    <property type="evidence" value="ECO:0007669"/>
    <property type="project" value="UniProtKB-UniRule"/>
</dbReference>
<dbReference type="GO" id="GO:0043952">
    <property type="term" value="P:protein transport by the Sec complex"/>
    <property type="evidence" value="ECO:0007669"/>
    <property type="project" value="TreeGrafter"/>
</dbReference>
<dbReference type="CDD" id="cd17928">
    <property type="entry name" value="DEXDc_SecA"/>
    <property type="match status" value="1"/>
</dbReference>
<dbReference type="CDD" id="cd18803">
    <property type="entry name" value="SF2_C_secA"/>
    <property type="match status" value="1"/>
</dbReference>
<dbReference type="FunFam" id="3.40.50.300:FF:000113">
    <property type="entry name" value="Preprotein translocase subunit SecA"/>
    <property type="match status" value="1"/>
</dbReference>
<dbReference type="FunFam" id="3.90.1440.10:FF:000001">
    <property type="entry name" value="Preprotein translocase subunit SecA"/>
    <property type="match status" value="1"/>
</dbReference>
<dbReference type="FunFam" id="1.10.3060.10:FF:000003">
    <property type="entry name" value="Protein translocase subunit SecA"/>
    <property type="match status" value="1"/>
</dbReference>
<dbReference type="FunFam" id="3.40.50.300:FF:000334">
    <property type="entry name" value="Protein translocase subunit SecA"/>
    <property type="match status" value="1"/>
</dbReference>
<dbReference type="Gene3D" id="3.10.450.50">
    <property type="match status" value="1"/>
</dbReference>
<dbReference type="Gene3D" id="1.10.3060.10">
    <property type="entry name" value="Helical scaffold and wing domains of SecA"/>
    <property type="match status" value="1"/>
</dbReference>
<dbReference type="Gene3D" id="3.40.50.300">
    <property type="entry name" value="P-loop containing nucleotide triphosphate hydrolases"/>
    <property type="match status" value="2"/>
</dbReference>
<dbReference type="Gene3D" id="3.90.1440.10">
    <property type="entry name" value="SecA, preprotein cross-linking domain"/>
    <property type="match status" value="1"/>
</dbReference>
<dbReference type="HAMAP" id="MF_01382">
    <property type="entry name" value="SecA"/>
    <property type="match status" value="1"/>
</dbReference>
<dbReference type="InterPro" id="IPR014001">
    <property type="entry name" value="Helicase_ATP-bd"/>
</dbReference>
<dbReference type="InterPro" id="IPR001650">
    <property type="entry name" value="Helicase_C-like"/>
</dbReference>
<dbReference type="InterPro" id="IPR027417">
    <property type="entry name" value="P-loop_NTPase"/>
</dbReference>
<dbReference type="InterPro" id="IPR004027">
    <property type="entry name" value="SEC_C_motif"/>
</dbReference>
<dbReference type="InterPro" id="IPR000185">
    <property type="entry name" value="SecA"/>
</dbReference>
<dbReference type="InterPro" id="IPR020937">
    <property type="entry name" value="SecA_CS"/>
</dbReference>
<dbReference type="InterPro" id="IPR011115">
    <property type="entry name" value="SecA_DEAD"/>
</dbReference>
<dbReference type="InterPro" id="IPR014018">
    <property type="entry name" value="SecA_motor_DEAD"/>
</dbReference>
<dbReference type="InterPro" id="IPR011130">
    <property type="entry name" value="SecA_preprotein_X-link_dom"/>
</dbReference>
<dbReference type="InterPro" id="IPR044722">
    <property type="entry name" value="SecA_SF2_C"/>
</dbReference>
<dbReference type="InterPro" id="IPR011116">
    <property type="entry name" value="SecA_Wing/Scaffold"/>
</dbReference>
<dbReference type="InterPro" id="IPR036266">
    <property type="entry name" value="SecA_Wing/Scaffold_sf"/>
</dbReference>
<dbReference type="InterPro" id="IPR036670">
    <property type="entry name" value="SecA_X-link_sf"/>
</dbReference>
<dbReference type="NCBIfam" id="NF009538">
    <property type="entry name" value="PRK12904.1"/>
    <property type="match status" value="1"/>
</dbReference>
<dbReference type="NCBIfam" id="TIGR00963">
    <property type="entry name" value="secA"/>
    <property type="match status" value="1"/>
</dbReference>
<dbReference type="PANTHER" id="PTHR30612:SF0">
    <property type="entry name" value="CHLOROPLAST PROTEIN-TRANSPORTING ATPASE"/>
    <property type="match status" value="1"/>
</dbReference>
<dbReference type="PANTHER" id="PTHR30612">
    <property type="entry name" value="SECA INNER MEMBRANE COMPONENT OF SEC PROTEIN SECRETION SYSTEM"/>
    <property type="match status" value="1"/>
</dbReference>
<dbReference type="Pfam" id="PF21090">
    <property type="entry name" value="P-loop_SecA"/>
    <property type="match status" value="1"/>
</dbReference>
<dbReference type="Pfam" id="PF02810">
    <property type="entry name" value="SEC-C"/>
    <property type="match status" value="1"/>
</dbReference>
<dbReference type="Pfam" id="PF07517">
    <property type="entry name" value="SecA_DEAD"/>
    <property type="match status" value="1"/>
</dbReference>
<dbReference type="Pfam" id="PF01043">
    <property type="entry name" value="SecA_PP_bind"/>
    <property type="match status" value="1"/>
</dbReference>
<dbReference type="Pfam" id="PF07516">
    <property type="entry name" value="SecA_SW"/>
    <property type="match status" value="1"/>
</dbReference>
<dbReference type="PRINTS" id="PR00906">
    <property type="entry name" value="SECA"/>
</dbReference>
<dbReference type="SMART" id="SM00957">
    <property type="entry name" value="SecA_DEAD"/>
    <property type="match status" value="1"/>
</dbReference>
<dbReference type="SMART" id="SM00958">
    <property type="entry name" value="SecA_PP_bind"/>
    <property type="match status" value="1"/>
</dbReference>
<dbReference type="SUPFAM" id="SSF81886">
    <property type="entry name" value="Helical scaffold and wing domains of SecA"/>
    <property type="match status" value="1"/>
</dbReference>
<dbReference type="SUPFAM" id="SSF52540">
    <property type="entry name" value="P-loop containing nucleoside triphosphate hydrolases"/>
    <property type="match status" value="2"/>
</dbReference>
<dbReference type="SUPFAM" id="SSF81767">
    <property type="entry name" value="Pre-protein crosslinking domain of SecA"/>
    <property type="match status" value="1"/>
</dbReference>
<dbReference type="PROSITE" id="PS01312">
    <property type="entry name" value="SECA"/>
    <property type="match status" value="1"/>
</dbReference>
<dbReference type="PROSITE" id="PS51196">
    <property type="entry name" value="SECA_MOTOR_DEAD"/>
    <property type="match status" value="1"/>
</dbReference>
<name>SECA_ACICJ</name>
<accession>A5G0Q9</accession>
<evidence type="ECO:0000255" key="1">
    <source>
        <dbReference type="HAMAP-Rule" id="MF_01382"/>
    </source>
</evidence>
<evidence type="ECO:0000305" key="2"/>
<comment type="function">
    <text evidence="1">Part of the Sec protein translocase complex. Interacts with the SecYEG preprotein conducting channel. Has a central role in coupling the hydrolysis of ATP to the transfer of proteins into and across the cell membrane, serving both as a receptor for the preprotein-SecB complex and as an ATP-driven molecular motor driving the stepwise translocation of polypeptide chains across the membrane.</text>
</comment>
<comment type="catalytic activity">
    <reaction evidence="1">
        <text>ATP + H2O + cellular proteinSide 1 = ADP + phosphate + cellular proteinSide 2.</text>
        <dbReference type="EC" id="7.4.2.8"/>
    </reaction>
</comment>
<comment type="cofactor">
    <cofactor evidence="1">
        <name>Zn(2+)</name>
        <dbReference type="ChEBI" id="CHEBI:29105"/>
    </cofactor>
    <text evidence="1">May bind 1 zinc ion per subunit.</text>
</comment>
<comment type="subunit">
    <text evidence="1">Monomer and homodimer. Part of the essential Sec protein translocation apparatus which comprises SecA, SecYEG and auxiliary proteins SecDF-YajC and YidC.</text>
</comment>
<comment type="subcellular location">
    <subcellularLocation>
        <location evidence="1">Cell inner membrane</location>
        <topology evidence="1">Peripheral membrane protein</topology>
        <orientation evidence="1">Cytoplasmic side</orientation>
    </subcellularLocation>
    <subcellularLocation>
        <location evidence="1">Cytoplasm</location>
    </subcellularLocation>
    <text evidence="1">Distribution is 50-50.</text>
</comment>
<comment type="similarity">
    <text evidence="1">Belongs to the SecA family.</text>
</comment>
<comment type="sequence caution" evidence="2">
    <conflict type="erroneous initiation">
        <sequence resource="EMBL-CDS" id="ABQ31441"/>
    </conflict>
    <text>Extended N-terminus.</text>
</comment>
<gene>
    <name evidence="1" type="primary">secA</name>
    <name type="ordered locus">Acry_2246</name>
</gene>
<proteinExistence type="inferred from homology"/>
<feature type="chain" id="PRO_0000318301" description="Protein translocase subunit SecA">
    <location>
        <begin position="1"/>
        <end position="910"/>
    </location>
</feature>
<feature type="binding site" evidence="1">
    <location>
        <position position="87"/>
    </location>
    <ligand>
        <name>ATP</name>
        <dbReference type="ChEBI" id="CHEBI:30616"/>
    </ligand>
</feature>
<feature type="binding site" evidence="1">
    <location>
        <begin position="105"/>
        <end position="109"/>
    </location>
    <ligand>
        <name>ATP</name>
        <dbReference type="ChEBI" id="CHEBI:30616"/>
    </ligand>
</feature>
<feature type="binding site" evidence="1">
    <location>
        <position position="501"/>
    </location>
    <ligand>
        <name>ATP</name>
        <dbReference type="ChEBI" id="CHEBI:30616"/>
    </ligand>
</feature>
<feature type="binding site" evidence="1">
    <location>
        <position position="894"/>
    </location>
    <ligand>
        <name>Zn(2+)</name>
        <dbReference type="ChEBI" id="CHEBI:29105"/>
    </ligand>
</feature>
<feature type="binding site" evidence="1">
    <location>
        <position position="896"/>
    </location>
    <ligand>
        <name>Zn(2+)</name>
        <dbReference type="ChEBI" id="CHEBI:29105"/>
    </ligand>
</feature>
<feature type="binding site" evidence="1">
    <location>
        <position position="905"/>
    </location>
    <ligand>
        <name>Zn(2+)</name>
        <dbReference type="ChEBI" id="CHEBI:29105"/>
    </ligand>
</feature>
<feature type="binding site" evidence="1">
    <location>
        <position position="906"/>
    </location>
    <ligand>
        <name>Zn(2+)</name>
        <dbReference type="ChEBI" id="CHEBI:29105"/>
    </ligand>
</feature>
<reference key="1">
    <citation type="submission" date="2007-05" db="EMBL/GenBank/DDBJ databases">
        <title>Complete sequence of chromosome of Acidiphilium cryptum JF-5.</title>
        <authorList>
            <consortium name="US DOE Joint Genome Institute"/>
            <person name="Copeland A."/>
            <person name="Lucas S."/>
            <person name="Lapidus A."/>
            <person name="Barry K."/>
            <person name="Detter J.C."/>
            <person name="Glavina del Rio T."/>
            <person name="Hammon N."/>
            <person name="Israni S."/>
            <person name="Dalin E."/>
            <person name="Tice H."/>
            <person name="Pitluck S."/>
            <person name="Sims D."/>
            <person name="Brettin T."/>
            <person name="Bruce D."/>
            <person name="Han C."/>
            <person name="Schmutz J."/>
            <person name="Larimer F."/>
            <person name="Land M."/>
            <person name="Hauser L."/>
            <person name="Kyrpides N."/>
            <person name="Kim E."/>
            <person name="Magnuson T."/>
            <person name="Richardson P."/>
        </authorList>
    </citation>
    <scope>NUCLEOTIDE SEQUENCE [LARGE SCALE GENOMIC DNA]</scope>
    <source>
        <strain>JF-5</strain>
    </source>
</reference>